<proteinExistence type="inferred from homology"/>
<comment type="similarity">
    <text evidence="2">Belongs to the bacterial ribosomal protein bL28 family.</text>
</comment>
<keyword id="KW-0687">Ribonucleoprotein</keyword>
<keyword id="KW-0689">Ribosomal protein</keyword>
<feature type="initiator methionine" description="Removed" evidence="1">
    <location>
        <position position="1"/>
    </location>
</feature>
<feature type="chain" id="PRO_0000178541" description="Large ribosomal subunit protein bL28">
    <location>
        <begin position="2"/>
        <end position="78"/>
    </location>
</feature>
<accession>Q5PC31</accession>
<dbReference type="EMBL" id="CP000026">
    <property type="protein sequence ID" value="AAV79381.1"/>
    <property type="molecule type" value="Genomic_DNA"/>
</dbReference>
<dbReference type="RefSeq" id="WP_001519051.1">
    <property type="nucleotide sequence ID" value="NC_006511.1"/>
</dbReference>
<dbReference type="SMR" id="Q5PC31"/>
<dbReference type="KEGG" id="spt:SPA3580"/>
<dbReference type="HOGENOM" id="CLU_064548_3_1_6"/>
<dbReference type="Proteomes" id="UP000008185">
    <property type="component" value="Chromosome"/>
</dbReference>
<dbReference type="GO" id="GO:0022625">
    <property type="term" value="C:cytosolic large ribosomal subunit"/>
    <property type="evidence" value="ECO:0007669"/>
    <property type="project" value="TreeGrafter"/>
</dbReference>
<dbReference type="GO" id="GO:0003735">
    <property type="term" value="F:structural constituent of ribosome"/>
    <property type="evidence" value="ECO:0007669"/>
    <property type="project" value="InterPro"/>
</dbReference>
<dbReference type="GO" id="GO:0006412">
    <property type="term" value="P:translation"/>
    <property type="evidence" value="ECO:0007669"/>
    <property type="project" value="UniProtKB-UniRule"/>
</dbReference>
<dbReference type="FunFam" id="2.30.170.40:FF:000001">
    <property type="entry name" value="50S ribosomal protein L28"/>
    <property type="match status" value="1"/>
</dbReference>
<dbReference type="Gene3D" id="2.30.170.40">
    <property type="entry name" value="Ribosomal protein L28/L24"/>
    <property type="match status" value="1"/>
</dbReference>
<dbReference type="HAMAP" id="MF_00373">
    <property type="entry name" value="Ribosomal_bL28"/>
    <property type="match status" value="1"/>
</dbReference>
<dbReference type="InterPro" id="IPR026569">
    <property type="entry name" value="Ribosomal_bL28"/>
</dbReference>
<dbReference type="InterPro" id="IPR034704">
    <property type="entry name" value="Ribosomal_bL28/bL31-like_sf"/>
</dbReference>
<dbReference type="InterPro" id="IPR001383">
    <property type="entry name" value="Ribosomal_bL28_bact-type"/>
</dbReference>
<dbReference type="InterPro" id="IPR037147">
    <property type="entry name" value="Ribosomal_bL28_sf"/>
</dbReference>
<dbReference type="NCBIfam" id="TIGR00009">
    <property type="entry name" value="L28"/>
    <property type="match status" value="1"/>
</dbReference>
<dbReference type="PANTHER" id="PTHR13528">
    <property type="entry name" value="39S RIBOSOMAL PROTEIN L28, MITOCHONDRIAL"/>
    <property type="match status" value="1"/>
</dbReference>
<dbReference type="PANTHER" id="PTHR13528:SF2">
    <property type="entry name" value="LARGE RIBOSOMAL SUBUNIT PROTEIN BL28M"/>
    <property type="match status" value="1"/>
</dbReference>
<dbReference type="Pfam" id="PF00830">
    <property type="entry name" value="Ribosomal_L28"/>
    <property type="match status" value="1"/>
</dbReference>
<dbReference type="SUPFAM" id="SSF143800">
    <property type="entry name" value="L28p-like"/>
    <property type="match status" value="1"/>
</dbReference>
<sequence>MSRVCQVTGKRPVTGNNRSHALNATKRRFLPNLHSHRFWVESEKRFVTLRVSAKGMRIIDKKGIETVLSELRARGEKY</sequence>
<name>RL28_SALPA</name>
<gene>
    <name evidence="2" type="primary">rpmB</name>
    <name type="ordered locus">SPA3580</name>
</gene>
<organism>
    <name type="scientific">Salmonella paratyphi A (strain ATCC 9150 / SARB42)</name>
    <dbReference type="NCBI Taxonomy" id="295319"/>
    <lineage>
        <taxon>Bacteria</taxon>
        <taxon>Pseudomonadati</taxon>
        <taxon>Pseudomonadota</taxon>
        <taxon>Gammaproteobacteria</taxon>
        <taxon>Enterobacterales</taxon>
        <taxon>Enterobacteriaceae</taxon>
        <taxon>Salmonella</taxon>
    </lineage>
</organism>
<protein>
    <recommendedName>
        <fullName evidence="2">Large ribosomal subunit protein bL28</fullName>
    </recommendedName>
    <alternativeName>
        <fullName evidence="3">50S ribosomal protein L28</fullName>
    </alternativeName>
</protein>
<evidence type="ECO:0000250" key="1"/>
<evidence type="ECO:0000255" key="2">
    <source>
        <dbReference type="HAMAP-Rule" id="MF_00373"/>
    </source>
</evidence>
<evidence type="ECO:0000305" key="3"/>
<reference key="1">
    <citation type="journal article" date="2004" name="Nat. Genet.">
        <title>Comparison of genome degradation in Paratyphi A and Typhi, human-restricted serovars of Salmonella enterica that cause typhoid.</title>
        <authorList>
            <person name="McClelland M."/>
            <person name="Sanderson K.E."/>
            <person name="Clifton S.W."/>
            <person name="Latreille P."/>
            <person name="Porwollik S."/>
            <person name="Sabo A."/>
            <person name="Meyer R."/>
            <person name="Bieri T."/>
            <person name="Ozersky P."/>
            <person name="McLellan M."/>
            <person name="Harkins C.R."/>
            <person name="Wang C."/>
            <person name="Nguyen C."/>
            <person name="Berghoff A."/>
            <person name="Elliott G."/>
            <person name="Kohlberg S."/>
            <person name="Strong C."/>
            <person name="Du F."/>
            <person name="Carter J."/>
            <person name="Kremizki C."/>
            <person name="Layman D."/>
            <person name="Leonard S."/>
            <person name="Sun H."/>
            <person name="Fulton L."/>
            <person name="Nash W."/>
            <person name="Miner T."/>
            <person name="Minx P."/>
            <person name="Delehaunty K."/>
            <person name="Fronick C."/>
            <person name="Magrini V."/>
            <person name="Nhan M."/>
            <person name="Warren W."/>
            <person name="Florea L."/>
            <person name="Spieth J."/>
            <person name="Wilson R.K."/>
        </authorList>
    </citation>
    <scope>NUCLEOTIDE SEQUENCE [LARGE SCALE GENOMIC DNA]</scope>
    <source>
        <strain>ATCC 9150 / SARB42</strain>
    </source>
</reference>